<name>RS19_ELYEP</name>
<dbReference type="EMBL" id="L27022">
    <property type="protein sequence ID" value="AAA83942.1"/>
    <property type="molecule type" value="Genomic_DNA"/>
</dbReference>
<dbReference type="GO" id="GO:1990904">
    <property type="term" value="C:ribonucleoprotein complex"/>
    <property type="evidence" value="ECO:0007669"/>
    <property type="project" value="UniProtKB-KW"/>
</dbReference>
<dbReference type="GO" id="GO:0005840">
    <property type="term" value="C:ribosome"/>
    <property type="evidence" value="ECO:0007669"/>
    <property type="project" value="UniProtKB-KW"/>
</dbReference>
<dbReference type="GO" id="GO:0019843">
    <property type="term" value="F:rRNA binding"/>
    <property type="evidence" value="ECO:0007669"/>
    <property type="project" value="UniProtKB-KW"/>
</dbReference>
<feature type="chain" id="PRO_0000129822" description="Small ribosomal subunit protein uS19">
    <location>
        <begin position="1" status="less than"/>
        <end position="12"/>
    </location>
</feature>
<feature type="non-terminal residue">
    <location>
        <position position="1"/>
    </location>
</feature>
<protein>
    <recommendedName>
        <fullName evidence="2">Small ribosomal subunit protein uS19</fullName>
    </recommendedName>
    <alternativeName>
        <fullName>30S ribosomal protein S19</fullName>
    </alternativeName>
</protein>
<organism>
    <name type="scientific">Elm yellows phytoplasma</name>
    <dbReference type="NCBI Taxonomy" id="35774"/>
    <lineage>
        <taxon>Bacteria</taxon>
        <taxon>Bacillati</taxon>
        <taxon>Mycoplasmatota</taxon>
        <taxon>Mollicutes</taxon>
        <taxon>Acholeplasmatales</taxon>
        <taxon>Acholeplasmataceae</taxon>
        <taxon>Candidatus Phytoplasma</taxon>
        <taxon>16SrV (Elm yellows group)</taxon>
    </lineage>
</organism>
<accession>Q47881</accession>
<keyword id="KW-0687">Ribonucleoprotein</keyword>
<keyword id="KW-0689">Ribosomal protein</keyword>
<keyword id="KW-0694">RNA-binding</keyword>
<keyword id="KW-0699">rRNA-binding</keyword>
<reference key="1">
    <citation type="journal article" date="1994" name="J. Bacteriol.">
        <title>Phylogeny of mycoplasmalike organisms (phytoplasmas): a basis for their classification.</title>
        <authorList>
            <person name="Gundersen D.E."/>
            <person name="Lee I.M."/>
            <person name="Rehner S.A."/>
            <person name="Davis R.E."/>
            <person name="Kingsbury D.T."/>
        </authorList>
    </citation>
    <scope>NUCLEOTIDE SEQUENCE [GENOMIC DNA]</scope>
</reference>
<proteinExistence type="inferred from homology"/>
<comment type="function">
    <text evidence="1">Protein S19 forms a complex with S13 that binds strongly to the 16S ribosomal RNA.</text>
</comment>
<comment type="similarity">
    <text evidence="2">Belongs to the universal ribosomal protein uS19 family.</text>
</comment>
<evidence type="ECO:0000250" key="1"/>
<evidence type="ECO:0000305" key="2"/>
<gene>
    <name type="primary">rpsS</name>
    <name type="synonym">rps19</name>
</gene>
<sequence length="12" mass="1283">GHAKGDKKVSKK</sequence>